<proteinExistence type="inferred from homology"/>
<dbReference type="EMBL" id="AE001363">
    <property type="protein sequence ID" value="AAD18229.1"/>
    <property type="molecule type" value="Genomic_DNA"/>
</dbReference>
<dbReference type="EMBL" id="BA000008">
    <property type="protein sequence ID" value="BAA98286.1"/>
    <property type="molecule type" value="Genomic_DNA"/>
</dbReference>
<dbReference type="EMBL" id="AE002161">
    <property type="protein sequence ID" value="AAF38507.1"/>
    <property type="molecule type" value="Genomic_DNA"/>
</dbReference>
<dbReference type="EMBL" id="AE009440">
    <property type="protein sequence ID" value="AAP98009.1"/>
    <property type="molecule type" value="Genomic_DNA"/>
</dbReference>
<dbReference type="PIR" id="C81547">
    <property type="entry name" value="C81547"/>
</dbReference>
<dbReference type="PIR" id="D86500">
    <property type="entry name" value="D86500"/>
</dbReference>
<dbReference type="PIR" id="H72123">
    <property type="entry name" value="H72123"/>
</dbReference>
<dbReference type="RefSeq" id="NP_224284.1">
    <property type="nucleotide sequence ID" value="NC_000922.1"/>
</dbReference>
<dbReference type="RefSeq" id="WP_010882726.1">
    <property type="nucleotide sequence ID" value="NZ_LN847257.1"/>
</dbReference>
<dbReference type="RefSeq" id="WP_010892148.1">
    <property type="nucleotide sequence ID" value="NZ_LN846995.1"/>
</dbReference>
<dbReference type="SMR" id="Q9Z9A5"/>
<dbReference type="STRING" id="406984.CPK_ORF00583"/>
<dbReference type="GeneID" id="45050121"/>
<dbReference type="KEGG" id="cpa:CP_0699"/>
<dbReference type="KEGG" id="cpj:nusG"/>
<dbReference type="KEGG" id="cpn:CPn_0076"/>
<dbReference type="KEGG" id="cpt:CpB0076"/>
<dbReference type="PATRIC" id="fig|115713.3.peg.87"/>
<dbReference type="eggNOG" id="COG0250">
    <property type="taxonomic scope" value="Bacteria"/>
</dbReference>
<dbReference type="HOGENOM" id="CLU_067287_1_0_0"/>
<dbReference type="OrthoDB" id="9809075at2"/>
<dbReference type="Proteomes" id="UP000000583">
    <property type="component" value="Chromosome"/>
</dbReference>
<dbReference type="Proteomes" id="UP000000801">
    <property type="component" value="Chromosome"/>
</dbReference>
<dbReference type="GO" id="GO:0005829">
    <property type="term" value="C:cytosol"/>
    <property type="evidence" value="ECO:0007669"/>
    <property type="project" value="TreeGrafter"/>
</dbReference>
<dbReference type="GO" id="GO:0006353">
    <property type="term" value="P:DNA-templated transcription termination"/>
    <property type="evidence" value="ECO:0007669"/>
    <property type="project" value="UniProtKB-UniRule"/>
</dbReference>
<dbReference type="GO" id="GO:0032784">
    <property type="term" value="P:regulation of DNA-templated transcription elongation"/>
    <property type="evidence" value="ECO:0007669"/>
    <property type="project" value="InterPro"/>
</dbReference>
<dbReference type="GO" id="GO:0031564">
    <property type="term" value="P:transcription antitermination"/>
    <property type="evidence" value="ECO:0007669"/>
    <property type="project" value="UniProtKB-UniRule"/>
</dbReference>
<dbReference type="GO" id="GO:0140673">
    <property type="term" value="P:transcription elongation-coupled chromatin remodeling"/>
    <property type="evidence" value="ECO:0007669"/>
    <property type="project" value="InterPro"/>
</dbReference>
<dbReference type="CDD" id="cd06091">
    <property type="entry name" value="KOW_NusG"/>
    <property type="match status" value="1"/>
</dbReference>
<dbReference type="CDD" id="cd09891">
    <property type="entry name" value="NGN_Bact_1"/>
    <property type="match status" value="1"/>
</dbReference>
<dbReference type="Gene3D" id="2.30.30.30">
    <property type="match status" value="1"/>
</dbReference>
<dbReference type="Gene3D" id="3.30.70.940">
    <property type="entry name" value="NusG, N-terminal domain"/>
    <property type="match status" value="1"/>
</dbReference>
<dbReference type="HAMAP" id="MF_00948">
    <property type="entry name" value="NusG"/>
    <property type="match status" value="1"/>
</dbReference>
<dbReference type="InterPro" id="IPR005824">
    <property type="entry name" value="KOW"/>
</dbReference>
<dbReference type="InterPro" id="IPR047050">
    <property type="entry name" value="NGN"/>
</dbReference>
<dbReference type="InterPro" id="IPR006645">
    <property type="entry name" value="NGN-like_dom"/>
</dbReference>
<dbReference type="InterPro" id="IPR036735">
    <property type="entry name" value="NGN_dom_sf"/>
</dbReference>
<dbReference type="InterPro" id="IPR043425">
    <property type="entry name" value="NusG-like"/>
</dbReference>
<dbReference type="InterPro" id="IPR014722">
    <property type="entry name" value="Rib_uL2_dom2"/>
</dbReference>
<dbReference type="InterPro" id="IPR001062">
    <property type="entry name" value="Transcrpt_antiterm_NusG"/>
</dbReference>
<dbReference type="InterPro" id="IPR008991">
    <property type="entry name" value="Translation_prot_SH3-like_sf"/>
</dbReference>
<dbReference type="NCBIfam" id="TIGR00922">
    <property type="entry name" value="nusG"/>
    <property type="match status" value="1"/>
</dbReference>
<dbReference type="PANTHER" id="PTHR30265">
    <property type="entry name" value="RHO-INTERACTING TRANSCRIPTION TERMINATION FACTOR NUSG"/>
    <property type="match status" value="1"/>
</dbReference>
<dbReference type="PANTHER" id="PTHR30265:SF2">
    <property type="entry name" value="TRANSCRIPTION TERMINATION_ANTITERMINATION PROTEIN NUSG"/>
    <property type="match status" value="1"/>
</dbReference>
<dbReference type="Pfam" id="PF02357">
    <property type="entry name" value="NusG"/>
    <property type="match status" value="1"/>
</dbReference>
<dbReference type="PRINTS" id="PR00338">
    <property type="entry name" value="NUSGTNSCPFCT"/>
</dbReference>
<dbReference type="SMART" id="SM00739">
    <property type="entry name" value="KOW"/>
    <property type="match status" value="1"/>
</dbReference>
<dbReference type="SMART" id="SM00738">
    <property type="entry name" value="NGN"/>
    <property type="match status" value="1"/>
</dbReference>
<dbReference type="SUPFAM" id="SSF82679">
    <property type="entry name" value="N-utilization substance G protein NusG, N-terminal domain"/>
    <property type="match status" value="1"/>
</dbReference>
<dbReference type="SUPFAM" id="SSF50104">
    <property type="entry name" value="Translation proteins SH3-like domain"/>
    <property type="match status" value="1"/>
</dbReference>
<accession>Q9Z9A5</accession>
<accession>Q9JRY1</accession>
<organism>
    <name type="scientific">Chlamydia pneumoniae</name>
    <name type="common">Chlamydophila pneumoniae</name>
    <dbReference type="NCBI Taxonomy" id="83558"/>
    <lineage>
        <taxon>Bacteria</taxon>
        <taxon>Pseudomonadati</taxon>
        <taxon>Chlamydiota</taxon>
        <taxon>Chlamydiia</taxon>
        <taxon>Chlamydiales</taxon>
        <taxon>Chlamydiaceae</taxon>
        <taxon>Chlamydia/Chlamydophila group</taxon>
        <taxon>Chlamydia</taxon>
    </lineage>
</organism>
<sequence>MYKWYVVQVFTAQEKKVKKALEDFKESSGMTDFIQEIILPIENVMEVKKGEHKVVEKYIWPGYLLVKMHLTDESWLYVKSTAGIVEFLGGGVPVALSEDEVRSILTDIEEKKSGVVQKHQFEVGSRVKINDGVFVNFIGTVSEVFHDKGRLSVMVSIFGRETRVDDLEFWQVEEVAPGQESE</sequence>
<comment type="function">
    <text evidence="1">Participates in transcription elongation, termination and antitermination.</text>
</comment>
<comment type="similarity">
    <text evidence="1">Belongs to the NusG family.</text>
</comment>
<gene>
    <name evidence="1" type="primary">nusG</name>
    <name type="ordered locus">CPn_0076</name>
    <name type="ordered locus">CP_0699</name>
    <name type="ordered locus">CpB0076</name>
</gene>
<reference key="1">
    <citation type="journal article" date="1999" name="Nat. Genet.">
        <title>Comparative genomes of Chlamydia pneumoniae and C. trachomatis.</title>
        <authorList>
            <person name="Kalman S."/>
            <person name="Mitchell W.P."/>
            <person name="Marathe R."/>
            <person name="Lammel C.J."/>
            <person name="Fan J."/>
            <person name="Hyman R.W."/>
            <person name="Olinger L."/>
            <person name="Grimwood J."/>
            <person name="Davis R.W."/>
            <person name="Stephens R.S."/>
        </authorList>
    </citation>
    <scope>NUCLEOTIDE SEQUENCE [LARGE SCALE GENOMIC DNA]</scope>
    <source>
        <strain>CWL029</strain>
    </source>
</reference>
<reference key="2">
    <citation type="journal article" date="2000" name="Nucleic Acids Res.">
        <title>Comparison of whole genome sequences of Chlamydia pneumoniae J138 from Japan and CWL029 from USA.</title>
        <authorList>
            <person name="Shirai M."/>
            <person name="Hirakawa H."/>
            <person name="Kimoto M."/>
            <person name="Tabuchi M."/>
            <person name="Kishi F."/>
            <person name="Ouchi K."/>
            <person name="Shiba T."/>
            <person name="Ishii K."/>
            <person name="Hattori M."/>
            <person name="Kuhara S."/>
            <person name="Nakazawa T."/>
        </authorList>
    </citation>
    <scope>NUCLEOTIDE SEQUENCE [LARGE SCALE GENOMIC DNA]</scope>
    <source>
        <strain>J138</strain>
    </source>
</reference>
<reference key="3">
    <citation type="journal article" date="2000" name="Nucleic Acids Res.">
        <title>Genome sequences of Chlamydia trachomatis MoPn and Chlamydia pneumoniae AR39.</title>
        <authorList>
            <person name="Read T.D."/>
            <person name="Brunham R.C."/>
            <person name="Shen C."/>
            <person name="Gill S.R."/>
            <person name="Heidelberg J.F."/>
            <person name="White O."/>
            <person name="Hickey E.K."/>
            <person name="Peterson J.D."/>
            <person name="Utterback T.R."/>
            <person name="Berry K.J."/>
            <person name="Bass S."/>
            <person name="Linher K.D."/>
            <person name="Weidman J.F."/>
            <person name="Khouri H.M."/>
            <person name="Craven B."/>
            <person name="Bowman C."/>
            <person name="Dodson R.J."/>
            <person name="Gwinn M.L."/>
            <person name="Nelson W.C."/>
            <person name="DeBoy R.T."/>
            <person name="Kolonay J.F."/>
            <person name="McClarty G."/>
            <person name="Salzberg S.L."/>
            <person name="Eisen J.A."/>
            <person name="Fraser C.M."/>
        </authorList>
    </citation>
    <scope>NUCLEOTIDE SEQUENCE [LARGE SCALE GENOMIC DNA]</scope>
    <source>
        <strain>AR39</strain>
    </source>
</reference>
<reference key="4">
    <citation type="submission" date="2002-05" db="EMBL/GenBank/DDBJ databases">
        <title>The genome sequence of Chlamydia pneumoniae TW183 and comparison with other Chlamydia strains based on whole genome sequence analysis.</title>
        <authorList>
            <person name="Geng M.M."/>
            <person name="Schuhmacher A."/>
            <person name="Muehldorfer I."/>
            <person name="Bensch K.W."/>
            <person name="Schaefer K.P."/>
            <person name="Schneider S."/>
            <person name="Pohl T."/>
            <person name="Essig A."/>
            <person name="Marre R."/>
            <person name="Melchers K."/>
        </authorList>
    </citation>
    <scope>NUCLEOTIDE SEQUENCE [LARGE SCALE GENOMIC DNA]</scope>
    <source>
        <strain>TW-183</strain>
    </source>
</reference>
<evidence type="ECO:0000255" key="1">
    <source>
        <dbReference type="HAMAP-Rule" id="MF_00948"/>
    </source>
</evidence>
<keyword id="KW-0804">Transcription</keyword>
<keyword id="KW-0889">Transcription antitermination</keyword>
<keyword id="KW-0805">Transcription regulation</keyword>
<keyword id="KW-0806">Transcription termination</keyword>
<name>NUSG_CHLPN</name>
<protein>
    <recommendedName>
        <fullName evidence="1">Transcription termination/antitermination protein NusG</fullName>
    </recommendedName>
</protein>
<feature type="chain" id="PRO_0000113923" description="Transcription termination/antitermination protein NusG">
    <location>
        <begin position="1"/>
        <end position="182"/>
    </location>
</feature>
<feature type="sequence variant" description="In strain: CWL029 and TW-183.">
    <original>T</original>
    <variation>M</variation>
    <location>
        <position position="140"/>
    </location>
</feature>